<comment type="function">
    <text evidence="1">Transfers the gamma-phosphate of ATP to the 4'-position of a tetraacyldisaccharide 1-phosphate intermediate (termed DS-1-P) to form tetraacyldisaccharide 1,4'-bis-phosphate (lipid IVA).</text>
</comment>
<comment type="catalytic activity">
    <reaction evidence="1">
        <text>a lipid A disaccharide + ATP = a lipid IVA + ADP + H(+)</text>
        <dbReference type="Rhea" id="RHEA:67840"/>
        <dbReference type="ChEBI" id="CHEBI:15378"/>
        <dbReference type="ChEBI" id="CHEBI:30616"/>
        <dbReference type="ChEBI" id="CHEBI:176343"/>
        <dbReference type="ChEBI" id="CHEBI:176425"/>
        <dbReference type="ChEBI" id="CHEBI:456216"/>
        <dbReference type="EC" id="2.7.1.130"/>
    </reaction>
</comment>
<comment type="pathway">
    <text evidence="1">Glycolipid biosynthesis; lipid IV(A) biosynthesis; lipid IV(A) from (3R)-3-hydroxytetradecanoyl-[acyl-carrier-protein] and UDP-N-acetyl-alpha-D-glucosamine: step 6/6.</text>
</comment>
<comment type="similarity">
    <text evidence="1">Belongs to the LpxK family.</text>
</comment>
<gene>
    <name evidence="1" type="primary">lpxK</name>
    <name type="ordered locus">PST_2636</name>
</gene>
<keyword id="KW-0067">ATP-binding</keyword>
<keyword id="KW-0418">Kinase</keyword>
<keyword id="KW-0441">Lipid A biosynthesis</keyword>
<keyword id="KW-0444">Lipid biosynthesis</keyword>
<keyword id="KW-0443">Lipid metabolism</keyword>
<keyword id="KW-0547">Nucleotide-binding</keyword>
<keyword id="KW-1185">Reference proteome</keyword>
<keyword id="KW-0808">Transferase</keyword>
<accession>A4VMT5</accession>
<reference key="1">
    <citation type="journal article" date="2008" name="Proc. Natl. Acad. Sci. U.S.A.">
        <title>Nitrogen fixation island and rhizosphere competence traits in the genome of root-associated Pseudomonas stutzeri A1501.</title>
        <authorList>
            <person name="Yan Y."/>
            <person name="Yang J."/>
            <person name="Dou Y."/>
            <person name="Chen M."/>
            <person name="Ping S."/>
            <person name="Peng J."/>
            <person name="Lu W."/>
            <person name="Zhang W."/>
            <person name="Yao Z."/>
            <person name="Li H."/>
            <person name="Liu W."/>
            <person name="He S."/>
            <person name="Geng L."/>
            <person name="Zhang X."/>
            <person name="Yang F."/>
            <person name="Yu H."/>
            <person name="Zhan Y."/>
            <person name="Li D."/>
            <person name="Lin Z."/>
            <person name="Wang Y."/>
            <person name="Elmerich C."/>
            <person name="Lin M."/>
            <person name="Jin Q."/>
        </authorList>
    </citation>
    <scope>NUCLEOTIDE SEQUENCE [LARGE SCALE GENOMIC DNA]</scope>
    <source>
        <strain>A1501</strain>
    </source>
</reference>
<sequence>MSVAERLQRAWYQGHPALCLLAPLELLYRRVVEARRRRFLEDPNTSYRAPVPVVVVGNITVGGTGKTPLILWLIEHCQRRGLRVGVVSRGYAAEPPTLPWRVRAEHPAQHCGDEPLLIVQRTGVPLMIDPDRARAVRALLQQEPLDLILSDDGLQHYRLARDLELVLIDAARGLGNGRCLPAGPLREPPERLGEVDAVLFNGAAADTVEGYAFSLQPVGLVELSTGRRWPLDHYPAGQQLHAVAGIGNPQRFFDTLETLHWRPIPHAFADHADYSPEQLKFSPELPLVMTEKDAVKCRAFAPPGWSYLQVQAVPSTAFVTWFDDQLARLLPDLS</sequence>
<evidence type="ECO:0000255" key="1">
    <source>
        <dbReference type="HAMAP-Rule" id="MF_00409"/>
    </source>
</evidence>
<protein>
    <recommendedName>
        <fullName evidence="1">Tetraacyldisaccharide 4'-kinase</fullName>
        <ecNumber evidence="1">2.7.1.130</ecNumber>
    </recommendedName>
    <alternativeName>
        <fullName evidence="1">Lipid A 4'-kinase</fullName>
    </alternativeName>
</protein>
<proteinExistence type="inferred from homology"/>
<organism>
    <name type="scientific">Stutzerimonas stutzeri (strain A1501)</name>
    <name type="common">Pseudomonas stutzeri</name>
    <dbReference type="NCBI Taxonomy" id="379731"/>
    <lineage>
        <taxon>Bacteria</taxon>
        <taxon>Pseudomonadati</taxon>
        <taxon>Pseudomonadota</taxon>
        <taxon>Gammaproteobacteria</taxon>
        <taxon>Pseudomonadales</taxon>
        <taxon>Pseudomonadaceae</taxon>
        <taxon>Stutzerimonas</taxon>
    </lineage>
</organism>
<dbReference type="EC" id="2.7.1.130" evidence="1"/>
<dbReference type="EMBL" id="CP000304">
    <property type="protein sequence ID" value="ABP80286.1"/>
    <property type="molecule type" value="Genomic_DNA"/>
</dbReference>
<dbReference type="RefSeq" id="WP_011913744.1">
    <property type="nucleotide sequence ID" value="NC_009434.1"/>
</dbReference>
<dbReference type="SMR" id="A4VMT5"/>
<dbReference type="KEGG" id="psa:PST_2636"/>
<dbReference type="eggNOG" id="COG1663">
    <property type="taxonomic scope" value="Bacteria"/>
</dbReference>
<dbReference type="HOGENOM" id="CLU_038816_2_0_6"/>
<dbReference type="UniPathway" id="UPA00359">
    <property type="reaction ID" value="UER00482"/>
</dbReference>
<dbReference type="Proteomes" id="UP000000233">
    <property type="component" value="Chromosome"/>
</dbReference>
<dbReference type="GO" id="GO:0005886">
    <property type="term" value="C:plasma membrane"/>
    <property type="evidence" value="ECO:0007669"/>
    <property type="project" value="TreeGrafter"/>
</dbReference>
<dbReference type="GO" id="GO:0005524">
    <property type="term" value="F:ATP binding"/>
    <property type="evidence" value="ECO:0007669"/>
    <property type="project" value="UniProtKB-UniRule"/>
</dbReference>
<dbReference type="GO" id="GO:0009029">
    <property type="term" value="F:tetraacyldisaccharide 4'-kinase activity"/>
    <property type="evidence" value="ECO:0007669"/>
    <property type="project" value="UniProtKB-UniRule"/>
</dbReference>
<dbReference type="GO" id="GO:0009245">
    <property type="term" value="P:lipid A biosynthetic process"/>
    <property type="evidence" value="ECO:0007669"/>
    <property type="project" value="UniProtKB-UniRule"/>
</dbReference>
<dbReference type="GO" id="GO:0009244">
    <property type="term" value="P:lipopolysaccharide core region biosynthetic process"/>
    <property type="evidence" value="ECO:0007669"/>
    <property type="project" value="TreeGrafter"/>
</dbReference>
<dbReference type="HAMAP" id="MF_00409">
    <property type="entry name" value="LpxK"/>
    <property type="match status" value="1"/>
</dbReference>
<dbReference type="InterPro" id="IPR003758">
    <property type="entry name" value="LpxK"/>
</dbReference>
<dbReference type="InterPro" id="IPR027417">
    <property type="entry name" value="P-loop_NTPase"/>
</dbReference>
<dbReference type="NCBIfam" id="TIGR00682">
    <property type="entry name" value="lpxK"/>
    <property type="match status" value="1"/>
</dbReference>
<dbReference type="PANTHER" id="PTHR42724">
    <property type="entry name" value="TETRAACYLDISACCHARIDE 4'-KINASE"/>
    <property type="match status" value="1"/>
</dbReference>
<dbReference type="PANTHER" id="PTHR42724:SF1">
    <property type="entry name" value="TETRAACYLDISACCHARIDE 4'-KINASE, MITOCHONDRIAL-RELATED"/>
    <property type="match status" value="1"/>
</dbReference>
<dbReference type="Pfam" id="PF02606">
    <property type="entry name" value="LpxK"/>
    <property type="match status" value="1"/>
</dbReference>
<dbReference type="SUPFAM" id="SSF52540">
    <property type="entry name" value="P-loop containing nucleoside triphosphate hydrolases"/>
    <property type="match status" value="1"/>
</dbReference>
<feature type="chain" id="PRO_0000340853" description="Tetraacyldisaccharide 4'-kinase">
    <location>
        <begin position="1"/>
        <end position="334"/>
    </location>
</feature>
<feature type="binding site" evidence="1">
    <location>
        <begin position="60"/>
        <end position="67"/>
    </location>
    <ligand>
        <name>ATP</name>
        <dbReference type="ChEBI" id="CHEBI:30616"/>
    </ligand>
</feature>
<name>LPXK_STUS1</name>